<accession>Q5SBP7</accession>
<sequence>MSANCVSAAPTSPKNSDVEEIRKSATYHSSVWGNHFLSYTSDVTEITAAEKEQLEKLKEKVKNLLAQTPDESTGKMELIDAIQRLGVGYHFTTEIQESLRQIHEGQIRNDDDDVRVVALRFRLLRQGGYRAPCDVFEKFMDDGGNFKESLKKDVEGMLSLYEASYYGIDGEEIMDKALEFSSSHLESMLHNISTKTNKSLLRRLQEALDTPISKAAIRLGATKFISTYREDESHNEDILNFAKLDFNILQKMHQEEANYLTRWWEDLDLASKLDFARDRMVESYFWSLGVYFQPQYRTSRIYLTKIISIVAVIDDIYDVYGSFDDLRSFTDVIQSWKISNADELPPYMRICFEALLGIYEDMGDRIGAPYAIDTMKELVDTYMQEAEWCYTEYVPTVDEYMKVALVTGGYLMVATTFLTGINNITKKDFDWIRNRPRLLQVAEVLTRLMDDIAGHGTEKKTTAVSCYMKEYECSEMEASRELSKQVKKAWKDLNDEWMEPRSSSAEIIGCIVNMSRVLHIMYSTGDDGFSDSSTRTTQAVKTLLVDHPMN</sequence>
<proteinExistence type="evidence at protein level"/>
<name>SELS_OCIBA</name>
<gene>
    <name type="primary">SES</name>
</gene>
<comment type="function">
    <text evidence="2">Sesquiterpene synthase that catalyzes the formation of alpha- and beta-selinene from trans,trans-farnesyl diphosphate (FPP). Also produces some nerolidol.</text>
</comment>
<comment type="catalytic activity">
    <reaction evidence="2">
        <text>(2E,6E)-farnesyl diphosphate = (+)-beta-selinene + diphosphate</text>
        <dbReference type="Rhea" id="RHEA:29483"/>
        <dbReference type="ChEBI" id="CHEBI:10443"/>
        <dbReference type="ChEBI" id="CHEBI:33019"/>
        <dbReference type="ChEBI" id="CHEBI:175763"/>
        <dbReference type="EC" id="4.2.3.198"/>
    </reaction>
</comment>
<comment type="catalytic activity">
    <reaction evidence="2">
        <text>(2E,6E)-farnesyl diphosphate = alpha-selinene + diphosphate</text>
        <dbReference type="Rhea" id="RHEA:47052"/>
        <dbReference type="ChEBI" id="CHEBI:33019"/>
        <dbReference type="ChEBI" id="CHEBI:59961"/>
        <dbReference type="ChEBI" id="CHEBI:175763"/>
        <dbReference type="EC" id="4.2.3.198"/>
    </reaction>
</comment>
<comment type="cofactor">
    <cofactor evidence="1">
        <name>Mg(2+)</name>
        <dbReference type="ChEBI" id="CHEBI:18420"/>
    </cofactor>
    <cofactor evidence="1">
        <name>Mn(2+)</name>
        <dbReference type="ChEBI" id="CHEBI:29035"/>
    </cofactor>
    <text evidence="1">Binds 3 Mg(2+) or Mn(2+) ions per subunit.</text>
</comment>
<comment type="pathway">
    <text>Secondary metabolite biosynthesis; terpenoid biosynthesis.</text>
</comment>
<comment type="domain">
    <text>The Asp-Asp-Xaa-Xaa-Asp/Glu (DDXXD/E) motif is important for the catalytic activity, presumably through binding to Mg(2+).</text>
</comment>
<comment type="similarity">
    <text evidence="3">Belongs to the terpene synthase family.</text>
</comment>
<evidence type="ECO:0000250" key="1"/>
<evidence type="ECO:0000269" key="2">
    <source>
    </source>
</evidence>
<evidence type="ECO:0000305" key="3"/>
<reference key="1">
    <citation type="journal article" date="2004" name="Plant Physiol.">
        <title>The biochemical and molecular basis for the divergent patterns in the biosynthesis of terpenes and phenylpropenes in the peltate glands of three cultivars of basil.</title>
        <authorList>
            <person name="Iijima Y."/>
            <person name="Davidovich-Rikanati R."/>
            <person name="Fridman E."/>
            <person name="Gang D.R."/>
            <person name="Bar E."/>
            <person name="Lewinsohn E."/>
            <person name="Pichersky E."/>
        </authorList>
    </citation>
    <scope>NUCLEOTIDE SEQUENCE [MRNA]</scope>
    <scope>FUNCTION</scope>
    <scope>CATALYTIC ACTIVITY</scope>
</reference>
<organism>
    <name type="scientific">Ocimum basilicum</name>
    <name type="common">Sweet basil</name>
    <dbReference type="NCBI Taxonomy" id="39350"/>
    <lineage>
        <taxon>Eukaryota</taxon>
        <taxon>Viridiplantae</taxon>
        <taxon>Streptophyta</taxon>
        <taxon>Embryophyta</taxon>
        <taxon>Tracheophyta</taxon>
        <taxon>Spermatophyta</taxon>
        <taxon>Magnoliopsida</taxon>
        <taxon>eudicotyledons</taxon>
        <taxon>Gunneridae</taxon>
        <taxon>Pentapetalae</taxon>
        <taxon>asterids</taxon>
        <taxon>lamiids</taxon>
        <taxon>Lamiales</taxon>
        <taxon>Lamiaceae</taxon>
        <taxon>Nepetoideae</taxon>
        <taxon>Ocimeae</taxon>
        <taxon>Ociminae</taxon>
        <taxon>Ocimum</taxon>
    </lineage>
</organism>
<dbReference type="EC" id="4.2.3.198" evidence="2"/>
<dbReference type="EMBL" id="AY693643">
    <property type="protein sequence ID" value="AAV63785.1"/>
    <property type="molecule type" value="mRNA"/>
</dbReference>
<dbReference type="SMR" id="Q5SBP7"/>
<dbReference type="KEGG" id="ag:AAV63785"/>
<dbReference type="BioCyc" id="MetaCyc:MONOMER-14959"/>
<dbReference type="BRENDA" id="4.2.3.198">
    <property type="organism ID" value="4385"/>
</dbReference>
<dbReference type="UniPathway" id="UPA00213"/>
<dbReference type="GO" id="GO:0000287">
    <property type="term" value="F:magnesium ion binding"/>
    <property type="evidence" value="ECO:0007669"/>
    <property type="project" value="InterPro"/>
</dbReference>
<dbReference type="GO" id="GO:0010333">
    <property type="term" value="F:terpene synthase activity"/>
    <property type="evidence" value="ECO:0007669"/>
    <property type="project" value="InterPro"/>
</dbReference>
<dbReference type="GO" id="GO:0016102">
    <property type="term" value="P:diterpenoid biosynthetic process"/>
    <property type="evidence" value="ECO:0007669"/>
    <property type="project" value="InterPro"/>
</dbReference>
<dbReference type="CDD" id="cd00684">
    <property type="entry name" value="Terpene_cyclase_plant_C1"/>
    <property type="match status" value="1"/>
</dbReference>
<dbReference type="FunFam" id="1.10.600.10:FF:000007">
    <property type="entry name" value="Isoprene synthase, chloroplastic"/>
    <property type="match status" value="1"/>
</dbReference>
<dbReference type="FunFam" id="1.50.10.130:FF:000001">
    <property type="entry name" value="Isoprene synthase, chloroplastic"/>
    <property type="match status" value="1"/>
</dbReference>
<dbReference type="Gene3D" id="1.10.600.10">
    <property type="entry name" value="Farnesyl Diphosphate Synthase"/>
    <property type="match status" value="1"/>
</dbReference>
<dbReference type="Gene3D" id="1.50.10.130">
    <property type="entry name" value="Terpene synthase, N-terminal domain"/>
    <property type="match status" value="1"/>
</dbReference>
<dbReference type="InterPro" id="IPR008949">
    <property type="entry name" value="Isoprenoid_synthase_dom_sf"/>
</dbReference>
<dbReference type="InterPro" id="IPR034741">
    <property type="entry name" value="Terpene_cyclase-like_1_C"/>
</dbReference>
<dbReference type="InterPro" id="IPR044814">
    <property type="entry name" value="Terpene_cyclase_plant_C1"/>
</dbReference>
<dbReference type="InterPro" id="IPR001906">
    <property type="entry name" value="Terpene_synth_N"/>
</dbReference>
<dbReference type="InterPro" id="IPR036965">
    <property type="entry name" value="Terpene_synth_N_sf"/>
</dbReference>
<dbReference type="InterPro" id="IPR050148">
    <property type="entry name" value="Terpene_synthase-like"/>
</dbReference>
<dbReference type="InterPro" id="IPR005630">
    <property type="entry name" value="Terpene_synthase_metal-bd"/>
</dbReference>
<dbReference type="InterPro" id="IPR008930">
    <property type="entry name" value="Terpenoid_cyclase/PrenylTrfase"/>
</dbReference>
<dbReference type="PANTHER" id="PTHR31225:SF221">
    <property type="entry name" value="(-)-GERMACRENE D SYNTHASE"/>
    <property type="match status" value="1"/>
</dbReference>
<dbReference type="PANTHER" id="PTHR31225">
    <property type="entry name" value="OS04G0344100 PROTEIN-RELATED"/>
    <property type="match status" value="1"/>
</dbReference>
<dbReference type="Pfam" id="PF01397">
    <property type="entry name" value="Terpene_synth"/>
    <property type="match status" value="1"/>
</dbReference>
<dbReference type="Pfam" id="PF03936">
    <property type="entry name" value="Terpene_synth_C"/>
    <property type="match status" value="1"/>
</dbReference>
<dbReference type="SFLD" id="SFLDS00005">
    <property type="entry name" value="Isoprenoid_Synthase_Type_I"/>
    <property type="match status" value="1"/>
</dbReference>
<dbReference type="SFLD" id="SFLDG01019">
    <property type="entry name" value="Terpene_Cyclase_Like_1_C_Termi"/>
    <property type="match status" value="1"/>
</dbReference>
<dbReference type="SUPFAM" id="SSF48239">
    <property type="entry name" value="Terpenoid cyclases/Protein prenyltransferases"/>
    <property type="match status" value="1"/>
</dbReference>
<dbReference type="SUPFAM" id="SSF48576">
    <property type="entry name" value="Terpenoid synthases"/>
    <property type="match status" value="1"/>
</dbReference>
<feature type="chain" id="PRO_0000399251" description="Selinene synthase">
    <location>
        <begin position="1"/>
        <end position="550"/>
    </location>
</feature>
<feature type="short sequence motif" description="DDXXD motif">
    <location>
        <begin position="314"/>
        <end position="318"/>
    </location>
</feature>
<feature type="binding site" evidence="1">
    <location>
        <position position="314"/>
    </location>
    <ligand>
        <name>Mg(2+)</name>
        <dbReference type="ChEBI" id="CHEBI:18420"/>
        <label>1</label>
    </ligand>
</feature>
<feature type="binding site" evidence="1">
    <location>
        <position position="314"/>
    </location>
    <ligand>
        <name>Mg(2+)</name>
        <dbReference type="ChEBI" id="CHEBI:18420"/>
        <label>2</label>
    </ligand>
</feature>
<feature type="binding site" evidence="1">
    <location>
        <position position="318"/>
    </location>
    <ligand>
        <name>Mg(2+)</name>
        <dbReference type="ChEBI" id="CHEBI:18420"/>
        <label>1</label>
    </ligand>
</feature>
<feature type="binding site" evidence="1">
    <location>
        <position position="318"/>
    </location>
    <ligand>
        <name>Mg(2+)</name>
        <dbReference type="ChEBI" id="CHEBI:18420"/>
        <label>2</label>
    </ligand>
</feature>
<feature type="binding site" evidence="1">
    <location>
        <position position="450"/>
    </location>
    <ligand>
        <name>Mg(2+)</name>
        <dbReference type="ChEBI" id="CHEBI:18420"/>
        <label>3</label>
    </ligand>
</feature>
<feature type="binding site" evidence="1">
    <location>
        <position position="458"/>
    </location>
    <ligand>
        <name>Mg(2+)</name>
        <dbReference type="ChEBI" id="CHEBI:18420"/>
        <label>3</label>
    </ligand>
</feature>
<protein>
    <recommendedName>
        <fullName>Selinene synthase</fullName>
        <ecNumber evidence="2">4.2.3.198</ecNumber>
    </recommendedName>
</protein>
<keyword id="KW-0456">Lyase</keyword>
<keyword id="KW-0460">Magnesium</keyword>
<keyword id="KW-0479">Metal-binding</keyword>